<organism>
    <name type="scientific">Homo sapiens</name>
    <name type="common">Human</name>
    <dbReference type="NCBI Taxonomy" id="9606"/>
    <lineage>
        <taxon>Eukaryota</taxon>
        <taxon>Metazoa</taxon>
        <taxon>Chordata</taxon>
        <taxon>Craniata</taxon>
        <taxon>Vertebrata</taxon>
        <taxon>Euteleostomi</taxon>
        <taxon>Mammalia</taxon>
        <taxon>Eutheria</taxon>
        <taxon>Euarchontoglires</taxon>
        <taxon>Primates</taxon>
        <taxon>Haplorrhini</taxon>
        <taxon>Catarrhini</taxon>
        <taxon>Hominidae</taxon>
        <taxon>Homo</taxon>
    </lineage>
</organism>
<reference key="1">
    <citation type="journal article" date="1999" name="J. Biol. Chem.">
        <title>Purification and cloning of a brefeldin A-inhibited guanine nucleotide-exchange protein for ADP-ribosylation factors.</title>
        <authorList>
            <person name="Togawa A."/>
            <person name="Morinaga N."/>
            <person name="Ogasawara M."/>
            <person name="Moss J."/>
            <person name="Vaughan M."/>
        </authorList>
    </citation>
    <scope>NUCLEOTIDE SEQUENCE [MRNA]</scope>
    <source>
        <tissue>Brain</tissue>
    </source>
</reference>
<reference key="2">
    <citation type="journal article" date="1999" name="Proc. Natl. Acad. Sci. U.S.A.">
        <title>p200 ARF-GEP1: a Golgi-localized guanine nucleotide exchange protein whose Sec7 domain is targeted by the drug brefeldin A.</title>
        <authorList>
            <person name="Mansour S.J."/>
            <person name="Skaug J."/>
            <person name="Zhao X.-H."/>
            <person name="Giordano J."/>
            <person name="Scherer S.W."/>
            <person name="Melancon P."/>
        </authorList>
    </citation>
    <scope>NUCLEOTIDE SEQUENCE [MRNA]</scope>
</reference>
<reference key="3">
    <citation type="journal article" date="2004" name="Nat. Genet.">
        <title>Complete sequencing and characterization of 21,243 full-length human cDNAs.</title>
        <authorList>
            <person name="Ota T."/>
            <person name="Suzuki Y."/>
            <person name="Nishikawa T."/>
            <person name="Otsuki T."/>
            <person name="Sugiyama T."/>
            <person name="Irie R."/>
            <person name="Wakamatsu A."/>
            <person name="Hayashi K."/>
            <person name="Sato H."/>
            <person name="Nagai K."/>
            <person name="Kimura K."/>
            <person name="Makita H."/>
            <person name="Sekine M."/>
            <person name="Obayashi M."/>
            <person name="Nishi T."/>
            <person name="Shibahara T."/>
            <person name="Tanaka T."/>
            <person name="Ishii S."/>
            <person name="Yamamoto J."/>
            <person name="Saito K."/>
            <person name="Kawai Y."/>
            <person name="Isono Y."/>
            <person name="Nakamura Y."/>
            <person name="Nagahari K."/>
            <person name="Murakami K."/>
            <person name="Yasuda T."/>
            <person name="Iwayanagi T."/>
            <person name="Wagatsuma M."/>
            <person name="Shiratori A."/>
            <person name="Sudo H."/>
            <person name="Hosoiri T."/>
            <person name="Kaku Y."/>
            <person name="Kodaira H."/>
            <person name="Kondo H."/>
            <person name="Sugawara M."/>
            <person name="Takahashi M."/>
            <person name="Kanda K."/>
            <person name="Yokoi T."/>
            <person name="Furuya T."/>
            <person name="Kikkawa E."/>
            <person name="Omura Y."/>
            <person name="Abe K."/>
            <person name="Kamihara K."/>
            <person name="Katsuta N."/>
            <person name="Sato K."/>
            <person name="Tanikawa M."/>
            <person name="Yamazaki M."/>
            <person name="Ninomiya K."/>
            <person name="Ishibashi T."/>
            <person name="Yamashita H."/>
            <person name="Murakawa K."/>
            <person name="Fujimori K."/>
            <person name="Tanai H."/>
            <person name="Kimata M."/>
            <person name="Watanabe M."/>
            <person name="Hiraoka S."/>
            <person name="Chiba Y."/>
            <person name="Ishida S."/>
            <person name="Ono Y."/>
            <person name="Takiguchi S."/>
            <person name="Watanabe S."/>
            <person name="Yosida M."/>
            <person name="Hotuta T."/>
            <person name="Kusano J."/>
            <person name="Kanehori K."/>
            <person name="Takahashi-Fujii A."/>
            <person name="Hara H."/>
            <person name="Tanase T.-O."/>
            <person name="Nomura Y."/>
            <person name="Togiya S."/>
            <person name="Komai F."/>
            <person name="Hara R."/>
            <person name="Takeuchi K."/>
            <person name="Arita M."/>
            <person name="Imose N."/>
            <person name="Musashino K."/>
            <person name="Yuuki H."/>
            <person name="Oshima A."/>
            <person name="Sasaki N."/>
            <person name="Aotsuka S."/>
            <person name="Yoshikawa Y."/>
            <person name="Matsunawa H."/>
            <person name="Ichihara T."/>
            <person name="Shiohata N."/>
            <person name="Sano S."/>
            <person name="Moriya S."/>
            <person name="Momiyama H."/>
            <person name="Satoh N."/>
            <person name="Takami S."/>
            <person name="Terashima Y."/>
            <person name="Suzuki O."/>
            <person name="Nakagawa S."/>
            <person name="Senoh A."/>
            <person name="Mizoguchi H."/>
            <person name="Goto Y."/>
            <person name="Shimizu F."/>
            <person name="Wakebe H."/>
            <person name="Hishigaki H."/>
            <person name="Watanabe T."/>
            <person name="Sugiyama A."/>
            <person name="Takemoto M."/>
            <person name="Kawakami B."/>
            <person name="Yamazaki M."/>
            <person name="Watanabe K."/>
            <person name="Kumagai A."/>
            <person name="Itakura S."/>
            <person name="Fukuzumi Y."/>
            <person name="Fujimori Y."/>
            <person name="Komiyama M."/>
            <person name="Tashiro H."/>
            <person name="Tanigami A."/>
            <person name="Fujiwara T."/>
            <person name="Ono T."/>
            <person name="Yamada K."/>
            <person name="Fujii Y."/>
            <person name="Ozaki K."/>
            <person name="Hirao M."/>
            <person name="Ohmori Y."/>
            <person name="Kawabata A."/>
            <person name="Hikiji T."/>
            <person name="Kobatake N."/>
            <person name="Inagaki H."/>
            <person name="Ikema Y."/>
            <person name="Okamoto S."/>
            <person name="Okitani R."/>
            <person name="Kawakami T."/>
            <person name="Noguchi S."/>
            <person name="Itoh T."/>
            <person name="Shigeta K."/>
            <person name="Senba T."/>
            <person name="Matsumura K."/>
            <person name="Nakajima Y."/>
            <person name="Mizuno T."/>
            <person name="Morinaga M."/>
            <person name="Sasaki M."/>
            <person name="Togashi T."/>
            <person name="Oyama M."/>
            <person name="Hata H."/>
            <person name="Watanabe M."/>
            <person name="Komatsu T."/>
            <person name="Mizushima-Sugano J."/>
            <person name="Satoh T."/>
            <person name="Shirai Y."/>
            <person name="Takahashi Y."/>
            <person name="Nakagawa K."/>
            <person name="Okumura K."/>
            <person name="Nagase T."/>
            <person name="Nomura N."/>
            <person name="Kikuchi H."/>
            <person name="Masuho Y."/>
            <person name="Yamashita R."/>
            <person name="Nakai K."/>
            <person name="Yada T."/>
            <person name="Nakamura Y."/>
            <person name="Ohara O."/>
            <person name="Isogai T."/>
            <person name="Sugano S."/>
        </authorList>
    </citation>
    <scope>NUCLEOTIDE SEQUENCE [LARGE SCALE MRNA] OF 1341-1849</scope>
    <source>
        <tissue>Ovarian carcinoma</tissue>
    </source>
</reference>
<reference key="4">
    <citation type="journal article" date="2013" name="MBio">
        <title>ACBD3 interaction with TBC1 domain 22 protein is differentially affected by enteroviral and kobuviral 3A protein binding.</title>
        <authorList>
            <person name="Greninger A.L."/>
            <person name="Knudsen G.M."/>
            <person name="Betegon M."/>
            <person name="Burlingame A.L."/>
            <person name="DeRisi J.L."/>
        </authorList>
    </citation>
    <scope>PROTEIN SEQUENCE OF 1569-1579</scope>
    <scope>INTERACTION WITH TBC1D22A AND TBC1D22B</scope>
    <scope>MASS SPECTROMETRY</scope>
</reference>
<reference key="5">
    <citation type="journal article" date="2007" name="BMC Genomics">
        <title>The full-ORF clone resource of the German cDNA consortium.</title>
        <authorList>
            <person name="Bechtel S."/>
            <person name="Rosenfelder H."/>
            <person name="Duda A."/>
            <person name="Schmidt C.P."/>
            <person name="Ernst U."/>
            <person name="Wellenreuther R."/>
            <person name="Mehrle A."/>
            <person name="Schuster C."/>
            <person name="Bahr A."/>
            <person name="Bloecker H."/>
            <person name="Heubner D."/>
            <person name="Hoerlein A."/>
            <person name="Michel G."/>
            <person name="Wedler H."/>
            <person name="Koehrer K."/>
            <person name="Ottenwaelder B."/>
            <person name="Poustka A."/>
            <person name="Wiemann S."/>
            <person name="Schupp I."/>
        </authorList>
    </citation>
    <scope>NUCLEOTIDE SEQUENCE [LARGE SCALE MRNA] OF 1637-1849</scope>
    <source>
        <tissue>Testis</tissue>
    </source>
</reference>
<reference key="6">
    <citation type="journal article" date="2000" name="Proc. Natl. Acad. Sci. U.S.A.">
        <title>Identification and localization of two brefeldin A-inhibited guanine nucleotide-exchange proteins for ADP-ribosylation factors in a macromolecular complex.</title>
        <authorList>
            <person name="Yamaji R."/>
            <person name="Adamik R."/>
            <person name="Takeda K."/>
            <person name="Togawa A."/>
            <person name="Pacheco-Rodriguez G."/>
            <person name="Ferrans V.J."/>
            <person name="Moss J."/>
            <person name="Vaughan M."/>
        </authorList>
    </citation>
    <scope>SUBCELLULAR LOCATION</scope>
    <scope>INTERACTION WITH ARFGEF2</scope>
</reference>
<reference key="7">
    <citation type="journal article" date="2003" name="Proc. Natl. Acad. Sci. U.S.A.">
        <title>Protein kinase A-anchoring (AKAP) domains in brefeldin A-inhibited guanine nucleotide-exchange protein 2 (BIG2).</title>
        <authorList>
            <person name="Li H."/>
            <person name="Adamik R."/>
            <person name="Pacheco-Rodriguez G."/>
            <person name="Moss J."/>
            <person name="Vaughan M."/>
        </authorList>
    </citation>
    <scope>FUNCTION</scope>
    <scope>INTERACTION WITH PRKAR1A AND PRKAR2A</scope>
    <scope>SUBCELLULAR LOCATION</scope>
</reference>
<reference key="8">
    <citation type="journal article" date="2003" name="Proc. Natl. Acad. Sci. U.S.A.">
        <title>Interaction of FK506-binding protein 13 with brefeldin A-inhibited guanine nucleotide-exchange protein 1 (BIG1): effects of FK506.</title>
        <authorList>
            <person name="Padilla P.I."/>
            <person name="Chang M.J."/>
            <person name="Pacheco-Rodriguez G."/>
            <person name="Adamik R."/>
            <person name="Moss J."/>
            <person name="Vaughan M."/>
        </authorList>
    </citation>
    <scope>INTERACTION WITH FKBP2</scope>
</reference>
<reference key="9">
    <citation type="journal article" date="2004" name="Proc. Natl. Acad. Sci. U.S.A.">
        <title>Nuclear localization and molecular partners of BIG1, a brefeldin A-inhibited guanine nucleotide-exchange protein for ADP-ribosylation factors.</title>
        <authorList>
            <person name="Padilla P.I."/>
            <person name="Pacheco-Rodriguez G."/>
            <person name="Moss J."/>
            <person name="Vaughan M."/>
        </authorList>
    </citation>
    <scope>SUBCELLULAR LOCATION</scope>
    <scope>INTERACTION WITH NCL AND NUP62</scope>
</reference>
<reference key="10">
    <citation type="journal article" date="2005" name="J. Biol. Chem.">
        <title>BIG1 is a binding partner of myosin IXb and regulates its Rho-GTPase activating protein activity.</title>
        <authorList>
            <person name="Saeki N."/>
            <person name="Tokuo H."/>
            <person name="Ikebe M."/>
        </authorList>
    </citation>
    <scope>FUNCTION</scope>
    <scope>INTERACTION WITH MYO9B</scope>
</reference>
<reference key="11">
    <citation type="journal article" date="2006" name="Cell">
        <title>Global, in vivo, and site-specific phosphorylation dynamics in signaling networks.</title>
        <authorList>
            <person name="Olsen J.V."/>
            <person name="Blagoev B."/>
            <person name="Gnad F."/>
            <person name="Macek B."/>
            <person name="Kumar C."/>
            <person name="Mortensen P."/>
            <person name="Mann M."/>
        </authorList>
    </citation>
    <scope>PHOSPHORYLATION [LARGE SCALE ANALYSIS] AT SER-1569</scope>
    <scope>IDENTIFICATION BY MASS SPECTROMETRY [LARGE SCALE ANALYSIS]</scope>
    <source>
        <tissue>Cervix carcinoma</tissue>
    </source>
</reference>
<reference key="12">
    <citation type="journal article" date="2006" name="Proc. Natl. Acad. Sci. U.S.A.">
        <title>Effect of protein kinase A on accumulation of brefeldin A-inhibited guanine nucleotide-exchange protein 1 (BIG1) in HepG2 cell nuclei.</title>
        <authorList>
            <person name="Citterio C."/>
            <person name="Jones H.D."/>
            <person name="Pacheco-Rodriguez G."/>
            <person name="Islam A."/>
            <person name="Moss J."/>
            <person name="Vaughan M."/>
        </authorList>
    </citation>
    <scope>SUBCELLULAR LOCATION</scope>
    <scope>MUTAGENESIS OF 712-LYS--LYS-714 AND SER-883</scope>
</reference>
<reference key="13">
    <citation type="journal article" date="2007" name="J. Biol. Chem.">
        <title>Interactions between conserved domains within homodimers in the BIG1, BIG2, and GBF1 Arf guanine nucleotide exchange factors.</title>
        <authorList>
            <person name="Ramaen O."/>
            <person name="Joubert A."/>
            <person name="Simister P."/>
            <person name="Belgareh-Touze N."/>
            <person name="Olivares-Sanchez M.C."/>
            <person name="Zeeh J.C."/>
            <person name="Chantalat S."/>
            <person name="Golinelli-Cohen M.P."/>
            <person name="Jackson C.L."/>
            <person name="Biou V."/>
            <person name="Cherfils J."/>
        </authorList>
    </citation>
    <scope>HOMODIMERIZATION</scope>
    <scope>MUTAGENESIS OF GLU-221</scope>
</reference>
<reference key="14">
    <citation type="journal article" date="2007" name="Proc. Natl. Acad. Sci. U.S.A.">
        <title>BIG1, a brefeldin A-inhibited guanine nucleotide-exchange protein, is required for correct glycosylation and function of integrin beta1.</title>
        <authorList>
            <person name="Shen X."/>
            <person name="Hong M.S."/>
            <person name="Moss J."/>
            <person name="Vaughan M."/>
        </authorList>
    </citation>
    <scope>FUNCTION</scope>
</reference>
<reference key="15">
    <citation type="journal article" date="2007" name="Proc. Natl. Acad. Sci. U.S.A.">
        <title>Regulation of brefeldin A-inhibited guanine nucleotide-exchange protein 1 (BIG1) and BIG2 activity via PKA and protein phosphatase 1gamma.</title>
        <authorList>
            <person name="Kuroda F."/>
            <person name="Moss J."/>
            <person name="Vaughan M."/>
        </authorList>
    </citation>
    <scope>PHOSPHORYLATION</scope>
    <scope>INTERACTION WITH PPP1CC</scope>
</reference>
<reference key="16">
    <citation type="journal article" date="2008" name="Mol. Cell">
        <title>Kinase-selective enrichment enables quantitative phosphoproteomics of the kinome across the cell cycle.</title>
        <authorList>
            <person name="Daub H."/>
            <person name="Olsen J.V."/>
            <person name="Bairlein M."/>
            <person name="Gnad F."/>
            <person name="Oppermann F.S."/>
            <person name="Korner R."/>
            <person name="Greff Z."/>
            <person name="Keri G."/>
            <person name="Stemmann O."/>
            <person name="Mann M."/>
        </authorList>
    </citation>
    <scope>PHOSPHORYLATION [LARGE SCALE ANALYSIS] AT SER-1569</scope>
    <scope>IDENTIFICATION BY MASS SPECTROMETRY [LARGE SCALE ANALYSIS]</scope>
    <source>
        <tissue>Cervix carcinoma</tissue>
    </source>
</reference>
<reference key="17">
    <citation type="journal article" date="2008" name="Proc. Natl. Acad. Sci. U.S.A.">
        <title>A quantitative atlas of mitotic phosphorylation.</title>
        <authorList>
            <person name="Dephoure N."/>
            <person name="Zhou C."/>
            <person name="Villen J."/>
            <person name="Beausoleil S.A."/>
            <person name="Bakalarski C.E."/>
            <person name="Elledge S.J."/>
            <person name="Gygi S.P."/>
        </authorList>
    </citation>
    <scope>PHOSPHORYLATION [LARGE SCALE ANALYSIS] AT SER-1569</scope>
    <scope>IDENTIFICATION BY MASS SPECTROMETRY [LARGE SCALE ANALYSIS]</scope>
    <source>
        <tissue>Cervix carcinoma</tissue>
    </source>
</reference>
<reference key="18">
    <citation type="journal article" date="2008" name="Proc. Natl. Acad. Sci. U.S.A.">
        <title>Association of guanine nucleotide-exchange protein BIG1 in HepG2 cell nuclei with nucleolin, U3 snoRNA, and fibrillarin.</title>
        <authorList>
            <person name="Padilla P.I."/>
            <person name="Uhart M."/>
            <person name="Pacheco-Rodriguez G."/>
            <person name="Peculis B.A."/>
            <person name="Moss J."/>
            <person name="Vaughan M."/>
        </authorList>
    </citation>
    <scope>INTERACTION WITH NCL; FBL; NUP62 AND U3 SMALL NUCLEOLAR RNA</scope>
    <scope>IDENTIFICATION IN SMALL NUCLEAR RIBONUCLEOPROTEIN COMPLEX</scope>
</reference>
<reference key="19">
    <citation type="journal article" date="2009" name="Anal. Chem.">
        <title>Lys-N and trypsin cover complementary parts of the phosphoproteome in a refined SCX-based approach.</title>
        <authorList>
            <person name="Gauci S."/>
            <person name="Helbig A.O."/>
            <person name="Slijper M."/>
            <person name="Krijgsveld J."/>
            <person name="Heck A.J."/>
            <person name="Mohammed S."/>
        </authorList>
    </citation>
    <scope>IDENTIFICATION BY MASS SPECTROMETRY [LARGE SCALE ANALYSIS]</scope>
</reference>
<reference key="20">
    <citation type="journal article" date="2009" name="J. Cell Biol.">
        <title>A role of histone H3 lysine 4 methyltransferase components in endosomal trafficking.</title>
        <authorList>
            <person name="Xu Z."/>
            <person name="Gong Q."/>
            <person name="Xia B."/>
            <person name="Groves B."/>
            <person name="Zimmermann M."/>
            <person name="Mugler C."/>
            <person name="Mu D."/>
            <person name="Matsumoto B."/>
            <person name="Seaman M."/>
            <person name="Ma D."/>
        </authorList>
    </citation>
    <scope>INTERACTION WITH DPY30</scope>
</reference>
<reference key="21">
    <citation type="journal article" date="2009" name="Proc. Natl. Acad. Sci. U.S.A.">
        <title>Interaction of phosphodiesterase 3A with brefeldin A-inhibited guanine nucleotide-exchange proteins BIG1 and BIG2 and effect on ARF1 activity.</title>
        <authorList>
            <person name="Puxeddu E."/>
            <person name="Uhart M."/>
            <person name="Li C.C."/>
            <person name="Ahmad F."/>
            <person name="Pacheco-Rodriguez G."/>
            <person name="Manganiello V.C."/>
            <person name="Moss J."/>
            <person name="Vaughan M."/>
        </authorList>
    </citation>
    <scope>INTERACTION WITH PDE3A</scope>
</reference>
<reference key="22">
    <citation type="journal article" date="2009" name="Sci. Signal.">
        <title>Quantitative phosphoproteomic analysis of T cell receptor signaling reveals system-wide modulation of protein-protein interactions.</title>
        <authorList>
            <person name="Mayya V."/>
            <person name="Lundgren D.H."/>
            <person name="Hwang S.-I."/>
            <person name="Rezaul K."/>
            <person name="Wu L."/>
            <person name="Eng J.K."/>
            <person name="Rodionov V."/>
            <person name="Han D.K."/>
        </authorList>
    </citation>
    <scope>IDENTIFICATION BY MASS SPECTROMETRY [LARGE SCALE ANALYSIS]</scope>
    <source>
        <tissue>Leukemic T-cell</tissue>
    </source>
</reference>
<reference key="23">
    <citation type="journal article" date="2010" name="Sci. Signal.">
        <title>Quantitative phosphoproteomics reveals widespread full phosphorylation site occupancy during mitosis.</title>
        <authorList>
            <person name="Olsen J.V."/>
            <person name="Vermeulen M."/>
            <person name="Santamaria A."/>
            <person name="Kumar C."/>
            <person name="Miller M.L."/>
            <person name="Jensen L.J."/>
            <person name="Gnad F."/>
            <person name="Cox J."/>
            <person name="Jensen T.S."/>
            <person name="Nigg E.A."/>
            <person name="Brunak S."/>
            <person name="Mann M."/>
        </authorList>
    </citation>
    <scope>PHOSPHORYLATION [LARGE SCALE ANALYSIS] AT SER-1569</scope>
    <scope>IDENTIFICATION BY MASS SPECTROMETRY [LARGE SCALE ANALYSIS]</scope>
    <source>
        <tissue>Cervix carcinoma</tissue>
    </source>
</reference>
<reference key="24">
    <citation type="journal article" date="2011" name="BMC Syst. Biol.">
        <title>Initial characterization of the human central proteome.</title>
        <authorList>
            <person name="Burkard T.R."/>
            <person name="Planyavsky M."/>
            <person name="Kaupe I."/>
            <person name="Breitwieser F.P."/>
            <person name="Buerckstuemmer T."/>
            <person name="Bennett K.L."/>
            <person name="Superti-Furga G."/>
            <person name="Colinge J."/>
        </authorList>
    </citation>
    <scope>IDENTIFICATION BY MASS SPECTROMETRY [LARGE SCALE ANALYSIS]</scope>
</reference>
<reference key="25">
    <citation type="journal article" date="2011" name="Proc. Natl. Acad. Sci. U.S.A.">
        <title>Effects of brefeldin A-inhibited guanine nucleotide-exchange (BIG) 1 and KANK1 proteins on cell polarity and directed migration during wound healing.</title>
        <authorList>
            <person name="Li C.C."/>
            <person name="Kuo J.C."/>
            <person name="Waterman C.M."/>
            <person name="Kiyama R."/>
            <person name="Moss J."/>
            <person name="Vaughan M."/>
        </authorList>
    </citation>
    <scope>FUNCTION</scope>
    <scope>SUBCELLULAR LOCATION</scope>
    <scope>INTERACTION WITH KANK1</scope>
</reference>
<reference key="26">
    <citation type="journal article" date="2010" name="PLoS ONE">
        <title>Specific functions of BIG1 and BIG2 in endomembrane organization.</title>
        <authorList>
            <person name="Boal F."/>
            <person name="Stephens D.J."/>
        </authorList>
    </citation>
    <scope>FUNCTION</scope>
</reference>
<reference key="27">
    <citation type="journal article" date="2011" name="Sci. Signal.">
        <title>System-wide temporal characterization of the proteome and phosphoproteome of human embryonic stem cell differentiation.</title>
        <authorList>
            <person name="Rigbolt K.T."/>
            <person name="Prokhorova T.A."/>
            <person name="Akimov V."/>
            <person name="Henningsen J."/>
            <person name="Johansen P.T."/>
            <person name="Kratchmarova I."/>
            <person name="Kassem M."/>
            <person name="Mann M."/>
            <person name="Olsen J.V."/>
            <person name="Blagoev B."/>
        </authorList>
    </citation>
    <scope>PHOSPHORYLATION [LARGE SCALE ANALYSIS] AT SER-1079 AND SER-1569</scope>
    <scope>IDENTIFICATION BY MASS SPECTROMETRY [LARGE SCALE ANALYSIS]</scope>
</reference>
<reference key="28">
    <citation type="journal article" date="2013" name="J. Proteome Res.">
        <title>Toward a comprehensive characterization of a human cancer cell phosphoproteome.</title>
        <authorList>
            <person name="Zhou H."/>
            <person name="Di Palma S."/>
            <person name="Preisinger C."/>
            <person name="Peng M."/>
            <person name="Polat A.N."/>
            <person name="Heck A.J."/>
            <person name="Mohammed S."/>
        </authorList>
    </citation>
    <scope>PHOSPHORYLATION [LARGE SCALE ANALYSIS] AT SER-52; SER-397; SER-410 AND SER-1569</scope>
    <scope>IDENTIFICATION BY MASS SPECTROMETRY [LARGE SCALE ANALYSIS]</scope>
    <source>
        <tissue>Cervix carcinoma</tissue>
        <tissue>Erythroleukemia</tissue>
    </source>
</reference>
<reference key="29">
    <citation type="journal article" date="2014" name="J. Proteomics">
        <title>An enzyme assisted RP-RPLC approach for in-depth analysis of human liver phosphoproteome.</title>
        <authorList>
            <person name="Bian Y."/>
            <person name="Song C."/>
            <person name="Cheng K."/>
            <person name="Dong M."/>
            <person name="Wang F."/>
            <person name="Huang J."/>
            <person name="Sun D."/>
            <person name="Wang L."/>
            <person name="Ye M."/>
            <person name="Zou H."/>
        </authorList>
    </citation>
    <scope>PHOSPHORYLATION [LARGE SCALE ANALYSIS] AT SER-1569</scope>
    <scope>IDENTIFICATION BY MASS SPECTROMETRY [LARGE SCALE ANALYSIS]</scope>
    <source>
        <tissue>Liver</tissue>
    </source>
</reference>
<reference key="30">
    <citation type="journal article" date="2020" name="Neurobiol. Dis.">
        <title>Arfgef1 haploinsufficiency in mice alters neuronal endosome composition and decreases membrane surface postsynaptic GABAA receptors.</title>
        <authorList>
            <person name="Teoh J."/>
            <person name="Subramanian N."/>
            <person name="Pero M.E."/>
            <person name="Bartolini F."/>
            <person name="Amador A."/>
            <person name="Kanber A."/>
            <person name="Williams D."/>
            <person name="Petri S."/>
            <person name="Yang M."/>
            <person name="Allen A.S."/>
            <person name="Beal J."/>
            <person name="Haut S.R."/>
            <person name="Frankel W.N."/>
        </authorList>
    </citation>
    <scope>INVOLVEMENT IN DEDISB</scope>
    <scope>VARIANT DEDISB 1455-CYS--GLN-1849 DEL</scope>
</reference>
<reference evidence="26" key="31">
    <citation type="journal article" date="2016" name="Cell Rep.">
        <title>Structural Insights into Arl1-Mediated Targeting of the Arf-GEF BIG1 to the trans-Golgi.</title>
        <authorList>
            <person name="Galindo A."/>
            <person name="Soler N."/>
            <person name="McLaughlin S.H."/>
            <person name="Yu M."/>
            <person name="Williams R.L."/>
            <person name="Munro S."/>
        </authorList>
    </citation>
    <scope>X-RAY CRYSTALLOGRAPHY (2.28 ANGSTROMS) OF 1-229</scope>
    <scope>INTERACTION WITH ARL1</scope>
    <scope>SUBCELLULAR LOCATION</scope>
</reference>
<reference evidence="27" key="32">
    <citation type="journal article" date="2016" name="J. Mol. Cell Biol.">
        <title>Structural basis for targeting BIG1 to Golgi apparatus through interaction of its DCB domain with Arl1.</title>
        <authorList>
            <person name="Wang R."/>
            <person name="Wang Z."/>
            <person name="Wang K."/>
            <person name="Zhang T."/>
            <person name="Ding J."/>
        </authorList>
    </citation>
    <scope>X-RAY CRYSTALLOGRAPHY (3.40 ANGSTROMS) OF 1-224</scope>
    <scope>INTERACTION WITH ARL1</scope>
    <scope>SUBCELLULAR LOCATION</scope>
    <scope>MUTAGENESIS OF LYS-105; TYR-109; LEU-156 AND GLN-200</scope>
</reference>
<reference key="33">
    <citation type="journal article" date="2006" name="Science">
        <title>The consensus coding sequences of human breast and colorectal cancers.</title>
        <authorList>
            <person name="Sjoeblom T."/>
            <person name="Jones S."/>
            <person name="Wood L.D."/>
            <person name="Parsons D.W."/>
            <person name="Lin J."/>
            <person name="Barber T.D."/>
            <person name="Mandelker D."/>
            <person name="Leary R.J."/>
            <person name="Ptak J."/>
            <person name="Silliman N."/>
            <person name="Szabo S."/>
            <person name="Buckhaults P."/>
            <person name="Farrell C."/>
            <person name="Meeh P."/>
            <person name="Markowitz S.D."/>
            <person name="Willis J."/>
            <person name="Dawson D."/>
            <person name="Willson J.K.V."/>
            <person name="Gazdar A.F."/>
            <person name="Hartigan J."/>
            <person name="Wu L."/>
            <person name="Liu C."/>
            <person name="Parmigiani G."/>
            <person name="Park B.H."/>
            <person name="Bachman K.E."/>
            <person name="Papadopoulos N."/>
            <person name="Vogelstein B."/>
            <person name="Kinzler K.W."/>
            <person name="Velculescu V.E."/>
        </authorList>
    </citation>
    <scope>VARIANT [LARGE SCALE ANALYSIS] GLU-316</scope>
</reference>
<reference key="34">
    <citation type="journal article" date="2021" name="Genet. Med.">
        <title>Haploinsufficiency of ARFGEF1 is associated with developmental delay, intellectual disability, and epilepsy with variable expressivity.</title>
        <authorList>
            <person name="Thomas Q."/>
            <person name="Gautier T."/>
            <person name="Marafi D."/>
            <person name="Besnard T."/>
            <person name="Willems M."/>
            <person name="Moutton S."/>
            <person name="Isidor B."/>
            <person name="Cogne B."/>
            <person name="Conrad S."/>
            <person name="Tenconi R."/>
            <person name="Iascone M."/>
            <person name="Sorlin A."/>
            <person name="Masurel A."/>
            <person name="Dabir T."/>
            <person name="Jackson A."/>
            <person name="Banka S."/>
            <person name="Delanne J."/>
            <person name="Lupski J.R."/>
            <person name="Saadi N.W."/>
            <person name="Alkuraya F.S."/>
            <person name="Zahrani F.A."/>
            <person name="Agrawal P.B."/>
            <person name="England E."/>
            <person name="Madden J.A."/>
            <person name="Posey J.E."/>
            <person name="Burglen L."/>
            <person name="Rodriguez D."/>
            <person name="Chevarin M."/>
            <person name="Nguyen S."/>
            <person name="Mau-Them F.T."/>
            <person name="Duffourd Y."/>
            <person name="Garret P."/>
            <person name="Bruel A.L."/>
            <person name="Callier P."/>
            <person name="Marle N."/>
            <person name="Denomme-Pichon A.S."/>
            <person name="Duplomb L."/>
            <person name="Philippe C."/>
            <person name="Thauvin-Robinet C."/>
            <person name="Govin J."/>
            <person name="Faivre L."/>
            <person name="Vitobello A."/>
        </authorList>
    </citation>
    <scope>VARIANTS DEDISB 648-GLN--GLN-1849 DEL; ASN-798; 842-GLN--GLN-1849 DEL AND 1774-ARG--GLN-1849 DEL</scope>
    <scope>CHARACTERIZATION OF VARIANTS DEDISB 648-GLN--GLN-1849 DEL AND ASN-798</scope>
</reference>
<proteinExistence type="evidence at protein level"/>
<dbReference type="EMBL" id="AF084520">
    <property type="protein sequence ID" value="AAD38427.1"/>
    <property type="molecule type" value="mRNA"/>
</dbReference>
<dbReference type="EMBL" id="AF111162">
    <property type="protein sequence ID" value="AAD43651.1"/>
    <property type="molecule type" value="mRNA"/>
</dbReference>
<dbReference type="EMBL" id="AK001788">
    <property type="protein sequence ID" value="BAA91912.1"/>
    <property type="molecule type" value="mRNA"/>
</dbReference>
<dbReference type="EMBL" id="AL117446">
    <property type="protein sequence ID" value="CAB55931.1"/>
    <property type="molecule type" value="mRNA"/>
</dbReference>
<dbReference type="CCDS" id="CCDS6199.1"/>
<dbReference type="PIR" id="T17241">
    <property type="entry name" value="T17241"/>
</dbReference>
<dbReference type="RefSeq" id="NP_001400113.1">
    <property type="nucleotide sequence ID" value="NM_001413184.1"/>
</dbReference>
<dbReference type="RefSeq" id="NP_006412.2">
    <property type="nucleotide sequence ID" value="NM_006421.5"/>
</dbReference>
<dbReference type="RefSeq" id="XP_005251191.1">
    <property type="nucleotide sequence ID" value="XM_005251134.4"/>
</dbReference>
<dbReference type="PDB" id="3LTL">
    <property type="method" value="X-ray"/>
    <property type="resolution" value="2.20 A"/>
    <property type="chains" value="A/B=691-889"/>
</dbReference>
<dbReference type="PDB" id="5EE5">
    <property type="method" value="X-ray"/>
    <property type="resolution" value="2.28 A"/>
    <property type="chains" value="A=1-229"/>
</dbReference>
<dbReference type="PDB" id="5J5C">
    <property type="method" value="X-ray"/>
    <property type="resolution" value="3.40 A"/>
    <property type="chains" value="B=1-224"/>
</dbReference>
<dbReference type="PDBsum" id="3LTL"/>
<dbReference type="PDBsum" id="5EE5"/>
<dbReference type="PDBsum" id="5J5C"/>
<dbReference type="SMR" id="Q9Y6D6"/>
<dbReference type="BioGRID" id="115816">
    <property type="interactions" value="176"/>
</dbReference>
<dbReference type="DIP" id="DIP-29748N"/>
<dbReference type="FunCoup" id="Q9Y6D6">
    <property type="interactions" value="4171"/>
</dbReference>
<dbReference type="IntAct" id="Q9Y6D6">
    <property type="interactions" value="94"/>
</dbReference>
<dbReference type="MINT" id="Q9Y6D6"/>
<dbReference type="STRING" id="9606.ENSP00000262215"/>
<dbReference type="GlyGen" id="Q9Y6D6">
    <property type="glycosylation" value="3 sites, 2 N-linked glycans (1 site), 1 O-linked glycan (1 site)"/>
</dbReference>
<dbReference type="iPTMnet" id="Q9Y6D6"/>
<dbReference type="PhosphoSitePlus" id="Q9Y6D6"/>
<dbReference type="BioMuta" id="ARFGEF1"/>
<dbReference type="DMDM" id="116241267"/>
<dbReference type="jPOST" id="Q9Y6D6"/>
<dbReference type="MassIVE" id="Q9Y6D6"/>
<dbReference type="PaxDb" id="9606-ENSP00000262215"/>
<dbReference type="PeptideAtlas" id="Q9Y6D6"/>
<dbReference type="ProteomicsDB" id="86655"/>
<dbReference type="Pumba" id="Q9Y6D6"/>
<dbReference type="Antibodypedia" id="12092">
    <property type="antibodies" value="77 antibodies from 15 providers"/>
</dbReference>
<dbReference type="DNASU" id="10565"/>
<dbReference type="Ensembl" id="ENST00000262215.8">
    <property type="protein sequence ID" value="ENSP00000262215.3"/>
    <property type="gene ID" value="ENSG00000066777.9"/>
</dbReference>
<dbReference type="GeneID" id="10565"/>
<dbReference type="KEGG" id="hsa:10565"/>
<dbReference type="MANE-Select" id="ENST00000262215.8">
    <property type="protein sequence ID" value="ENSP00000262215.3"/>
    <property type="RefSeq nucleotide sequence ID" value="NM_006421.5"/>
    <property type="RefSeq protein sequence ID" value="NP_006412.2"/>
</dbReference>
<dbReference type="UCSC" id="uc003xxo.2">
    <property type="organism name" value="human"/>
</dbReference>
<dbReference type="AGR" id="HGNC:15772"/>
<dbReference type="CTD" id="10565"/>
<dbReference type="DisGeNET" id="10565"/>
<dbReference type="GeneCards" id="ARFGEF1"/>
<dbReference type="HGNC" id="HGNC:15772">
    <property type="gene designation" value="ARFGEF1"/>
</dbReference>
<dbReference type="HPA" id="ENSG00000066777">
    <property type="expression patterns" value="Low tissue specificity"/>
</dbReference>
<dbReference type="MalaCards" id="ARFGEF1"/>
<dbReference type="MIM" id="604141">
    <property type="type" value="gene"/>
</dbReference>
<dbReference type="MIM" id="619964">
    <property type="type" value="phenotype"/>
</dbReference>
<dbReference type="neXtProt" id="NX_Q9Y6D6"/>
<dbReference type="OpenTargets" id="ENSG00000066777"/>
<dbReference type="PharmGKB" id="PA134908197"/>
<dbReference type="VEuPathDB" id="HostDB:ENSG00000066777"/>
<dbReference type="eggNOG" id="KOG0929">
    <property type="taxonomic scope" value="Eukaryota"/>
</dbReference>
<dbReference type="GeneTree" id="ENSGT00940000157108"/>
<dbReference type="InParanoid" id="Q9Y6D6"/>
<dbReference type="OMA" id="EVMCAYI"/>
<dbReference type="OrthoDB" id="18431at2759"/>
<dbReference type="PAN-GO" id="Q9Y6D6">
    <property type="GO annotations" value="0 GO annotations based on evolutionary models"/>
</dbReference>
<dbReference type="PhylomeDB" id="Q9Y6D6"/>
<dbReference type="TreeFam" id="TF300714"/>
<dbReference type="PathwayCommons" id="Q9Y6D6"/>
<dbReference type="SignaLink" id="Q9Y6D6"/>
<dbReference type="SIGNOR" id="Q9Y6D6"/>
<dbReference type="BioGRID-ORCS" id="10565">
    <property type="hits" value="25 hits in 1158 CRISPR screens"/>
</dbReference>
<dbReference type="ChiTaRS" id="ARFGEF1">
    <property type="organism name" value="human"/>
</dbReference>
<dbReference type="EvolutionaryTrace" id="Q9Y6D6"/>
<dbReference type="GeneWiki" id="ARFGEF1"/>
<dbReference type="GenomeRNAi" id="10565"/>
<dbReference type="Pharos" id="Q9Y6D6">
    <property type="development level" value="Tbio"/>
</dbReference>
<dbReference type="PRO" id="PR:Q9Y6D6"/>
<dbReference type="Proteomes" id="UP000005640">
    <property type="component" value="Chromosome 8"/>
</dbReference>
<dbReference type="RNAct" id="Q9Y6D6">
    <property type="molecule type" value="protein"/>
</dbReference>
<dbReference type="Bgee" id="ENSG00000066777">
    <property type="expression patterns" value="Expressed in primordial germ cell in gonad and 204 other cell types or tissues"/>
</dbReference>
<dbReference type="ExpressionAtlas" id="Q9Y6D6">
    <property type="expression patterns" value="baseline and differential"/>
</dbReference>
<dbReference type="GO" id="GO:0005829">
    <property type="term" value="C:cytosol"/>
    <property type="evidence" value="ECO:0000314"/>
    <property type="project" value="UniProtKB"/>
</dbReference>
<dbReference type="GO" id="GO:0005794">
    <property type="term" value="C:Golgi apparatus"/>
    <property type="evidence" value="ECO:0000314"/>
    <property type="project" value="HPA"/>
</dbReference>
<dbReference type="GO" id="GO:0000139">
    <property type="term" value="C:Golgi membrane"/>
    <property type="evidence" value="ECO:0000314"/>
    <property type="project" value="UniProtKB"/>
</dbReference>
<dbReference type="GO" id="GO:0016363">
    <property type="term" value="C:nuclear matrix"/>
    <property type="evidence" value="ECO:0007669"/>
    <property type="project" value="UniProtKB-SubCell"/>
</dbReference>
<dbReference type="GO" id="GO:0005730">
    <property type="term" value="C:nucleolus"/>
    <property type="evidence" value="ECO:0000314"/>
    <property type="project" value="UniProtKB"/>
</dbReference>
<dbReference type="GO" id="GO:0005654">
    <property type="term" value="C:nucleoplasm"/>
    <property type="evidence" value="ECO:0000314"/>
    <property type="project" value="HPA"/>
</dbReference>
<dbReference type="GO" id="GO:0048471">
    <property type="term" value="C:perinuclear region of cytoplasm"/>
    <property type="evidence" value="ECO:0000314"/>
    <property type="project" value="UniProtKB"/>
</dbReference>
<dbReference type="GO" id="GO:0030532">
    <property type="term" value="C:small nuclear ribonucleoprotein complex"/>
    <property type="evidence" value="ECO:0000314"/>
    <property type="project" value="UniProtKB"/>
</dbReference>
<dbReference type="GO" id="GO:0005802">
    <property type="term" value="C:trans-Golgi network"/>
    <property type="evidence" value="ECO:0000250"/>
    <property type="project" value="UniProtKB"/>
</dbReference>
<dbReference type="GO" id="GO:0005085">
    <property type="term" value="F:guanyl-nucleotide exchange factor activity"/>
    <property type="evidence" value="ECO:0000314"/>
    <property type="project" value="UniProtKB"/>
</dbReference>
<dbReference type="GO" id="GO:0017022">
    <property type="term" value="F:myosin binding"/>
    <property type="evidence" value="ECO:0000353"/>
    <property type="project" value="UniProtKB"/>
</dbReference>
<dbReference type="GO" id="GO:0034237">
    <property type="term" value="F:protein kinase A regulatory subunit binding"/>
    <property type="evidence" value="ECO:0000314"/>
    <property type="project" value="UniProtKB"/>
</dbReference>
<dbReference type="GO" id="GO:0010256">
    <property type="term" value="P:endomembrane system organization"/>
    <property type="evidence" value="ECO:0000315"/>
    <property type="project" value="UniProtKB"/>
</dbReference>
<dbReference type="GO" id="GO:0006887">
    <property type="term" value="P:exocytosis"/>
    <property type="evidence" value="ECO:0000304"/>
    <property type="project" value="ProtInc"/>
</dbReference>
<dbReference type="GO" id="GO:0007030">
    <property type="term" value="P:Golgi organization"/>
    <property type="evidence" value="ECO:0000315"/>
    <property type="project" value="UniProtKB"/>
</dbReference>
<dbReference type="GO" id="GO:0030837">
    <property type="term" value="P:negative regulation of actin filament polymerization"/>
    <property type="evidence" value="ECO:0000315"/>
    <property type="project" value="UniProtKB"/>
</dbReference>
<dbReference type="GO" id="GO:0034260">
    <property type="term" value="P:negative regulation of GTPase activity"/>
    <property type="evidence" value="ECO:0000314"/>
    <property type="project" value="UniProtKB"/>
</dbReference>
<dbReference type="GO" id="GO:0031175">
    <property type="term" value="P:neuron projection development"/>
    <property type="evidence" value="ECO:0007669"/>
    <property type="project" value="Ensembl"/>
</dbReference>
<dbReference type="GO" id="GO:0051897">
    <property type="term" value="P:positive regulation of phosphatidylinositol 3-kinase/protein kinase B signal transduction"/>
    <property type="evidence" value="ECO:0007669"/>
    <property type="project" value="Ensembl"/>
</dbReference>
<dbReference type="GO" id="GO:0090303">
    <property type="term" value="P:positive regulation of wound healing"/>
    <property type="evidence" value="ECO:0000315"/>
    <property type="project" value="UniProtKB"/>
</dbReference>
<dbReference type="GO" id="GO:0006486">
    <property type="term" value="P:protein glycosylation"/>
    <property type="evidence" value="ECO:0000315"/>
    <property type="project" value="UniProtKB"/>
</dbReference>
<dbReference type="GO" id="GO:0015031">
    <property type="term" value="P:protein transport"/>
    <property type="evidence" value="ECO:0007669"/>
    <property type="project" value="UniProtKB-KW"/>
</dbReference>
<dbReference type="GO" id="GO:0032012">
    <property type="term" value="P:regulation of ARF protein signal transduction"/>
    <property type="evidence" value="ECO:0007669"/>
    <property type="project" value="InterPro"/>
</dbReference>
<dbReference type="GO" id="GO:2000114">
    <property type="term" value="P:regulation of establishment of cell polarity"/>
    <property type="evidence" value="ECO:0000315"/>
    <property type="project" value="UniProtKB"/>
</dbReference>
<dbReference type="CDD" id="cd00171">
    <property type="entry name" value="Sec7"/>
    <property type="match status" value="1"/>
</dbReference>
<dbReference type="DisProt" id="DP02612"/>
<dbReference type="FunFam" id="1.25.10.10:FF:000143">
    <property type="entry name" value="ADP-ribosylation factor guanine nucleotide-exchange factor 2 (brefeldin A-inhibited)"/>
    <property type="match status" value="1"/>
</dbReference>
<dbReference type="FunFam" id="1.10.1000.11:FF:000003">
    <property type="entry name" value="Brefeldin A-inhibited guanine nucleotide-exchange protein 1"/>
    <property type="match status" value="1"/>
</dbReference>
<dbReference type="FunFam" id="1.10.220.20:FF:000002">
    <property type="entry name" value="Brefeldin A-inhibited guanine nucleotide-exchange protein 1"/>
    <property type="match status" value="1"/>
</dbReference>
<dbReference type="Gene3D" id="1.10.220.20">
    <property type="match status" value="1"/>
</dbReference>
<dbReference type="Gene3D" id="1.10.1000.11">
    <property type="entry name" value="Arf Nucleotide-binding Site Opener,domain 2"/>
    <property type="match status" value="1"/>
</dbReference>
<dbReference type="Gene3D" id="1.25.10.10">
    <property type="entry name" value="Leucine-rich Repeat Variant"/>
    <property type="match status" value="1"/>
</dbReference>
<dbReference type="InterPro" id="IPR011989">
    <property type="entry name" value="ARM-like"/>
</dbReference>
<dbReference type="InterPro" id="IPR016024">
    <property type="entry name" value="ARM-type_fold"/>
</dbReference>
<dbReference type="InterPro" id="IPR032629">
    <property type="entry name" value="DCB_dom"/>
</dbReference>
<dbReference type="InterPro" id="IPR015403">
    <property type="entry name" value="Mon2/Sec7/BIG1-like_HDS"/>
</dbReference>
<dbReference type="InterPro" id="IPR032691">
    <property type="entry name" value="Mon2/Sec7/BIG1-like_HUS"/>
</dbReference>
<dbReference type="InterPro" id="IPR046455">
    <property type="entry name" value="Sec7/BIG1-like_C"/>
</dbReference>
<dbReference type="InterPro" id="IPR023394">
    <property type="entry name" value="Sec7_C_sf"/>
</dbReference>
<dbReference type="InterPro" id="IPR000904">
    <property type="entry name" value="Sec7_dom"/>
</dbReference>
<dbReference type="InterPro" id="IPR035999">
    <property type="entry name" value="Sec7_dom_sf"/>
</dbReference>
<dbReference type="PANTHER" id="PTHR10663:SF137">
    <property type="entry name" value="BREFELDIN A-INHIBITED GUANINE NUCLEOTIDE-EXCHANGE PROTEIN 1"/>
    <property type="match status" value="1"/>
</dbReference>
<dbReference type="PANTHER" id="PTHR10663">
    <property type="entry name" value="GUANYL-NUCLEOTIDE EXCHANGE FACTOR"/>
    <property type="match status" value="1"/>
</dbReference>
<dbReference type="Pfam" id="PF20252">
    <property type="entry name" value="BIG2_C"/>
    <property type="match status" value="1"/>
</dbReference>
<dbReference type="Pfam" id="PF16213">
    <property type="entry name" value="DCB"/>
    <property type="match status" value="1"/>
</dbReference>
<dbReference type="Pfam" id="PF01369">
    <property type="entry name" value="Sec7"/>
    <property type="match status" value="1"/>
</dbReference>
<dbReference type="Pfam" id="PF09324">
    <property type="entry name" value="Sec7-like_HDS"/>
    <property type="match status" value="1"/>
</dbReference>
<dbReference type="Pfam" id="PF12783">
    <property type="entry name" value="Sec7-like_HUS"/>
    <property type="match status" value="1"/>
</dbReference>
<dbReference type="SMART" id="SM00222">
    <property type="entry name" value="Sec7"/>
    <property type="match status" value="1"/>
</dbReference>
<dbReference type="SUPFAM" id="SSF48371">
    <property type="entry name" value="ARM repeat"/>
    <property type="match status" value="1"/>
</dbReference>
<dbReference type="SUPFAM" id="SSF48425">
    <property type="entry name" value="Sec7 domain"/>
    <property type="match status" value="1"/>
</dbReference>
<dbReference type="PROSITE" id="PS50190">
    <property type="entry name" value="SEC7"/>
    <property type="match status" value="1"/>
</dbReference>
<evidence type="ECO:0000250" key="1">
    <source>
        <dbReference type="UniProtKB" id="D4A631"/>
    </source>
</evidence>
<evidence type="ECO:0000250" key="2">
    <source>
        <dbReference type="UniProtKB" id="G3X9K3"/>
    </source>
</evidence>
<evidence type="ECO:0000255" key="3">
    <source>
        <dbReference type="PROSITE-ProRule" id="PRU00189"/>
    </source>
</evidence>
<evidence type="ECO:0000256" key="4">
    <source>
        <dbReference type="SAM" id="MobiDB-lite"/>
    </source>
</evidence>
<evidence type="ECO:0000269" key="5">
    <source>
    </source>
</evidence>
<evidence type="ECO:0000269" key="6">
    <source>
    </source>
</evidence>
<evidence type="ECO:0000269" key="7">
    <source>
    </source>
</evidence>
<evidence type="ECO:0000269" key="8">
    <source>
    </source>
</evidence>
<evidence type="ECO:0000269" key="9">
    <source>
    </source>
</evidence>
<evidence type="ECO:0000269" key="10">
    <source>
    </source>
</evidence>
<evidence type="ECO:0000269" key="11">
    <source>
    </source>
</evidence>
<evidence type="ECO:0000269" key="12">
    <source>
    </source>
</evidence>
<evidence type="ECO:0000269" key="13">
    <source>
    </source>
</evidence>
<evidence type="ECO:0000269" key="14">
    <source>
    </source>
</evidence>
<evidence type="ECO:0000269" key="15">
    <source>
    </source>
</evidence>
<evidence type="ECO:0000269" key="16">
    <source>
    </source>
</evidence>
<evidence type="ECO:0000269" key="17">
    <source>
    </source>
</evidence>
<evidence type="ECO:0000269" key="18">
    <source>
    </source>
</evidence>
<evidence type="ECO:0000269" key="19">
    <source>
    </source>
</evidence>
<evidence type="ECO:0000269" key="20">
    <source>
    </source>
</evidence>
<evidence type="ECO:0000269" key="21">
    <source>
    </source>
</evidence>
<evidence type="ECO:0000269" key="22">
    <source>
    </source>
</evidence>
<evidence type="ECO:0000269" key="23">
    <source>
    </source>
</evidence>
<evidence type="ECO:0000269" key="24">
    <source>
    </source>
</evidence>
<evidence type="ECO:0000305" key="25"/>
<evidence type="ECO:0007744" key="26">
    <source>
        <dbReference type="PDB" id="5EE5"/>
    </source>
</evidence>
<evidence type="ECO:0007744" key="27">
    <source>
        <dbReference type="PDB" id="5J5C"/>
    </source>
</evidence>
<evidence type="ECO:0007744" key="28">
    <source>
    </source>
</evidence>
<evidence type="ECO:0007744" key="29">
    <source>
    </source>
</evidence>
<evidence type="ECO:0007744" key="30">
    <source>
    </source>
</evidence>
<evidence type="ECO:0007744" key="31">
    <source>
    </source>
</evidence>
<evidence type="ECO:0007744" key="32">
    <source>
    </source>
</evidence>
<evidence type="ECO:0007744" key="33">
    <source>
    </source>
</evidence>
<evidence type="ECO:0007744" key="34">
    <source>
    </source>
</evidence>
<evidence type="ECO:0007829" key="35">
    <source>
        <dbReference type="PDB" id="3LTL"/>
    </source>
</evidence>
<evidence type="ECO:0007829" key="36">
    <source>
        <dbReference type="PDB" id="5EE5"/>
    </source>
</evidence>
<evidence type="ECO:0007829" key="37">
    <source>
        <dbReference type="PDB" id="5J5C"/>
    </source>
</evidence>
<sequence length="1849" mass="208767">MYEGKKTKNMFLTRALEKILADKEVKKAHHSQLRKACEVALEEIKAETEKQSPPHGEAKAGSSTLPPVKSKTNFIEADKYFLPFELACQSKCPRIVSTSLDCLQKLIAYGHLTGNAPDSTTPGKKLIDRIIETICGCFQGPQTDEGVQLQIIKALLTAVTSQHIEIHEGTVLQAVRTCYNIYLASKNLINQTTAKATLTQMLNVIFARMENQALQEAKQMEKERHRQHHHLLQSPVSHHEPESPQLRYLPPQTVDHISQEHEGDLDLHTNDVDKSLQDDTEPENGSDISSAENEQTEADQATAAETLSKNEVLYDGENHDCEEKPQDIVQNIVEEMVNIVVGDMGEGTTINASADGNIGTIEDGSDSENIQANGIPGTPISVAYTPSLPDDRLSVSSNDTQESGNSSGPSPGAKFSHILQKDAFLVFRSLCKLSMKPLSDGPPDPKSHELRSKILSLQLLLSILQNAGPIFRTNEMFINAIKQYLCVALSKNGVSSVPEVFELSLSIFLTLLSNFKTHLKMQIEVFFKEIFLYILETSTSSFDHKWMVIQTLTRICADAQSVVDIYVNYDCDLNAANIFERLVNDLSKIAQGRGSQELGMSNVQELSLRKKGLECLVSILKCMVEWSKDQYVNPNSQTTLGQEKPSEQEMSEIKHPETINRYGSLNSLESTSSSGIGSYSTQMSGTDNPEQFEVLKQQKEIIEQGIDLFNKKPKRGIQYLQEQGMLGTTPEDIAQFLHQEERLDSTQVGEFLGDNDKFNKEVMYAYVDQHDFSGKDFVSALRMFLEGFRLPGEAQKIDRLMEKFAARYLECNQGQTLFASADTAYVLAYSIIMLTTDLHSPQVKNKMTKEQYIKMNRGINDSKDLPEEYLSAIYNEIAGKKISMKETKELTIPTKSSKQNVASEKQRRLLYNLEMEQMAKTAKALMEAVSHVQAPFTSATHLEHVRPMFKLAWTPFLAAFSVGLQDCDDTEVASLCLEGIRCAIRIACIFSIQLERDAYVQALARFTLLTVSSGITEMKQKNIDTIKTLITVAHTDGNYLGNSWHEILKCISQLELAQLIGTGVKPRYISGTVRGREGSLTGTKDQAPDEFVGLGLVGGNVDWKQIASIQESIGETSSQSVVVAVDRIFTGSTRLDGNAIVDFVRWLCAVSMDELLSTTHPRMFSLQKIVEISYYNMGRIRLQWSRIWEVIGDHFNKVGCNPNEDVAIFAVDSLRQLSMKFLEKGELANFRFQKDFLRPFEHIMKRNRSPTIRDMVVRCIAQMVNSQAANIRSGWKNIFSVFHLAASDQDESIVELAFQTTGHIVTLVFEKHFPATIDSFQDAVKCLSEFACNAAFPDTSMEAIRLIRHCAKYVSDRPQAFKEYTSDDMNVAPEDRVWVRGWFPILFELSCIINRCKLDVRTRGLTVMFEIMKTYGHTYEKHWWQDLFRIVFRIFDNMKLPEQQTEKAEWMTTTCNHALYAICDVFTQYLEVLSDVLLDDIFAQLYWCVQQDNEQLARSGTNCLENVVILNGEKFTLEIWDKTCNCTLDIFKTTIPHALLTWRPNSGETAPPPPSPVSEKPLDTISQKSVDIHDSIQPRSVDNRPQAPLVSASAVNEEVSKIKSTAKFPEQKLFAALLIKCVVQLELIQTIDNIVFFPATSKKEDAENLAAAQRDAVDFDVRVDTQDQGMYRFLTSQQLFKLLDCLLESHRFAKAFNSNNEQRTALWKAGFKGKSKPNLLKQETSSLACGLRILFRMYMDESRVSAWEEVQQRLLNVCSEALSYFLTLTSESHREAWTNLLLLFLTKVLKISDNRFKAHASFYYPLLCEIMQFDLIPELRAVLRRFFLRIGVVFQISQPPEQELGINKQ</sequence>
<accession>Q9Y6D6</accession>
<accession>Q9NV46</accession>
<accession>Q9UFV2</accession>
<accession>Q9UNL0</accession>
<name>BIG1_HUMAN</name>
<comment type="function">
    <text evidence="6 9 12 18 19">Promotes guanine-nucleotide exchange on ARF1 and ARF3. Promotes the activation of ARF1/ARF3 through replacement of GDP with GTP. Involved in vesicular trafficking. Required for the maintenance of Golgi structure; the function may be independent of its GEF activity. Required for the maturation of integrin beta-1 in the Golgi. Involved in the establishment and persistence of cell polarity during directed cell movement in wound healing. Proposed to act as A kinase-anchoring protein (AKAP) and may mediate crosstalk between Arf and PKA pathways. Inhibits GAP activity of MYO9B probably through competitive RhoA binding. The function in the nucleus remains to be determined.</text>
</comment>
<comment type="activity regulation">
    <text>Inhibited by brefeldin A.</text>
</comment>
<comment type="subunit">
    <text evidence="5 6 7 8 9 13 14 15 16 17 19 20 21 22">Homodimer (PubMed:17640864). Interacts with ARFGEF2/BIG2; both proteins are probably part of the same or very similar macromolecular complexes (PubMed:10716990). Interacts with FKBP2 (PubMed:12606707). Interacts with MYO9B (PubMed:15644318). Interacts with PRKAR1A and PRKAR2A (PubMed:12571360). Interacts with PPP1CC (PubMed:17360629). Interacts with NCL, FBL, NUP62 and U3 small nucleolar RNA (PubMed:14973189, PubMed:18292223). Interacts with DPY30 (PubMed:19651892). Interacts with PDE3A (PubMed:19332778). Interacts with KANK1 (PubMed:22084092). Interacts with TBC1D22A and TBC1D22B (PubMed:23572552). Interacts (via N-terminus) with ARL1 (PubMed:27373159, PubMed:27436755).</text>
</comment>
<comment type="interaction">
    <interactant intactId="EBI-1044254">
        <id>Q9Y6D6</id>
    </interactant>
    <interactant intactId="EBI-2837511">
        <id>Q9Y6D5</id>
        <label>ARFGEF2</label>
    </interactant>
    <organismsDiffer>false</organismsDiffer>
    <experiments>14</experiments>
</comment>
<comment type="interaction">
    <interactant intactId="EBI-1044254">
        <id>Q9Y6D6</id>
    </interactant>
    <interactant intactId="EBI-2556221">
        <id>Q14678</id>
        <label>KANK1</label>
    </interactant>
    <organismsDiffer>false</organismsDiffer>
    <experiments>8</experiments>
</comment>
<comment type="interaction">
    <interactant intactId="EBI-1044254">
        <id>Q9Y6D6</id>
    </interactant>
    <interactant intactId="EBI-2691397">
        <id>Q7Z4S6</id>
        <label>KIF21A</label>
    </interactant>
    <organismsDiffer>false</organismsDiffer>
    <experiments>7</experiments>
</comment>
<comment type="interaction">
    <interactant intactId="EBI-1044254">
        <id>Q9Y6D6</id>
    </interactant>
    <interactant intactId="EBI-6251716">
        <id>Q7Z4S6-2</id>
        <label>KIF21A</label>
    </interactant>
    <organismsDiffer>false</organismsDiffer>
    <experiments>4</experiments>
</comment>
<comment type="interaction">
    <interactant intactId="EBI-1044254">
        <id>Q9Y6D6</id>
    </interactant>
    <interactant intactId="EBI-716185">
        <id>Q99417</id>
        <label>MYCBP</label>
    </interactant>
    <organismsDiffer>false</organismsDiffer>
    <experiments>6</experiments>
</comment>
<comment type="interaction">
    <interactant intactId="EBI-1044254">
        <id>Q9Y6D6</id>
    </interactant>
    <interactant intactId="EBI-6251250">
        <id>Q13459-2</id>
        <label>MYO9B</label>
    </interactant>
    <organismsDiffer>false</organismsDiffer>
    <experiments>2</experiments>
</comment>
<comment type="interaction">
    <interactant intactId="EBI-1044254">
        <id>Q9Y6D6</id>
    </interactant>
    <interactant intactId="EBI-346967">
        <id>P19338</id>
        <label>NCL</label>
    </interactant>
    <organismsDiffer>false</organismsDiffer>
    <experiments>5</experiments>
</comment>
<comment type="interaction">
    <interactant intactId="EBI-1044254">
        <id>Q9Y6D6</id>
    </interactant>
    <interactant intactId="EBI-7192066">
        <id>Q14432</id>
        <label>PDE3A</label>
    </interactant>
    <organismsDiffer>false</organismsDiffer>
    <experiments>6</experiments>
</comment>
<comment type="subcellular location">
    <subcellularLocation>
        <location>Cytoplasm</location>
    </subcellularLocation>
    <subcellularLocation>
        <location>Cytoplasm</location>
        <location>Perinuclear region</location>
    </subcellularLocation>
    <subcellularLocation>
        <location evidence="6">Golgi apparatus</location>
    </subcellularLocation>
    <subcellularLocation>
        <location evidence="21 22">Golgi apparatus</location>
        <location evidence="21 22">trans-Golgi network membrane</location>
    </subcellularLocation>
    <subcellularLocation>
        <location evidence="8">Nucleus</location>
    </subcellularLocation>
    <subcellularLocation>
        <location evidence="8">Nucleus</location>
        <location evidence="8">Nucleolus</location>
    </subcellularLocation>
    <subcellularLocation>
        <location evidence="8">Nucleus matrix</location>
    </subcellularLocation>
    <text>Translocates from cytoplasm to membranes and nucleus upon cAMP treatment.</text>
</comment>
<comment type="tissue specificity">
    <text>Expressed in placenta, lung, heart, brain, kidney and pancreas.</text>
</comment>
<comment type="PTM">
    <text evidence="13">Phosphorylated. In vitro phosphorylated by PKA reducing its GEF activity and dephosphorylated by phosphatase PP1.</text>
</comment>
<comment type="disease" evidence="23 24">
    <disease id="DI-06472">
        <name>Developmental delay, impaired speech, and behavioral abnormalities, with or without seizures</name>
        <acronym>DEDISB</acronym>
        <description>An autosomal dominant disorder characterized by mild to moderately impaired intellectual development, language delay, motor deficits, and behavioral abnormalities including aggression, hyperactivity, and autism spectrum disorder. About half of individuals develop various types of seizures. More variable features include dysmorphic facial features, mild ocular anomalies, and non-specific findings on brain imaging.</description>
        <dbReference type="MIM" id="619964"/>
    </disease>
    <text>The disease is caused by variants affecting the gene represented in this entry.</text>
</comment>
<protein>
    <recommendedName>
        <fullName>Brefeldin A-inhibited guanine nucleotide-exchange protein 1</fullName>
        <shortName>Brefeldin A-inhibited GEP 1</shortName>
    </recommendedName>
    <alternativeName>
        <fullName>ADP-ribosylation factor guanine nucleotide-exchange factor 1</fullName>
    </alternativeName>
    <alternativeName>
        <fullName>p200 ARF guanine nucleotide exchange factor</fullName>
    </alternativeName>
    <alternativeName>
        <fullName>p200 ARF-GEP1</fullName>
    </alternativeName>
</protein>
<gene>
    <name type="primary">ARFGEF1</name>
    <name type="synonym">ARFGEP1</name>
    <name type="synonym">BIG1</name>
</gene>
<keyword id="KW-0002">3D-structure</keyword>
<keyword id="KW-1268">Autism spectrum disorder</keyword>
<keyword id="KW-0963">Cytoplasm</keyword>
<keyword id="KW-0903">Direct protein sequencing</keyword>
<keyword id="KW-0225">Disease variant</keyword>
<keyword id="KW-0887">Epilepsy</keyword>
<keyword id="KW-0333">Golgi apparatus</keyword>
<keyword id="KW-0344">Guanine-nucleotide releasing factor</keyword>
<keyword id="KW-0991">Intellectual disability</keyword>
<keyword id="KW-0472">Membrane</keyword>
<keyword id="KW-0539">Nucleus</keyword>
<keyword id="KW-0597">Phosphoprotein</keyword>
<keyword id="KW-0653">Protein transport</keyword>
<keyword id="KW-1267">Proteomics identification</keyword>
<keyword id="KW-1185">Reference proteome</keyword>
<keyword id="KW-0813">Transport</keyword>
<feature type="chain" id="PRO_0000120207" description="Brefeldin A-inhibited guanine nucleotide-exchange protein 1">
    <location>
        <begin position="1"/>
        <end position="1849"/>
    </location>
</feature>
<feature type="domain" description="SEC7" evidence="3">
    <location>
        <begin position="709"/>
        <end position="840"/>
    </location>
</feature>
<feature type="region of interest" description="DCB; DCB:DCB domain and DCB:HUS domain interaction">
    <location>
        <begin position="2"/>
        <end position="224"/>
    </location>
</feature>
<feature type="region of interest" description="Disordered" evidence="4">
    <location>
        <begin position="46"/>
        <end position="65"/>
    </location>
</feature>
<feature type="region of interest" description="Disordered" evidence="4">
    <location>
        <begin position="216"/>
        <end position="248"/>
    </location>
</feature>
<feature type="region of interest" description="Disordered" evidence="4">
    <location>
        <begin position="267"/>
        <end position="302"/>
    </location>
</feature>
<feature type="region of interest" description="Disordered" evidence="4">
    <location>
        <begin position="378"/>
        <end position="413"/>
    </location>
</feature>
<feature type="region of interest" description="HUS; DCB:HUS domain interaction">
    <location>
        <begin position="557"/>
        <end position="577"/>
    </location>
</feature>
<feature type="region of interest" description="Disordered" evidence="4">
    <location>
        <begin position="1543"/>
        <end position="1562"/>
    </location>
</feature>
<feature type="short sequence motif" description="Nuclear localization signal (NLS)">
    <location>
        <begin position="711"/>
        <end position="715"/>
    </location>
</feature>
<feature type="compositionally biased region" description="Basic and acidic residues" evidence="4">
    <location>
        <begin position="46"/>
        <end position="58"/>
    </location>
</feature>
<feature type="compositionally biased region" description="Basic and acidic residues" evidence="4">
    <location>
        <begin position="267"/>
        <end position="277"/>
    </location>
</feature>
<feature type="compositionally biased region" description="Polar residues" evidence="4">
    <location>
        <begin position="394"/>
        <end position="409"/>
    </location>
</feature>
<feature type="modified residue" description="Phosphoserine" evidence="33">
    <location>
        <position position="52"/>
    </location>
</feature>
<feature type="modified residue" description="Phosphoserine" evidence="2">
    <location>
        <position position="286"/>
    </location>
</feature>
<feature type="modified residue" description="Phosphoserine" evidence="2">
    <location>
        <position position="289"/>
    </location>
</feature>
<feature type="modified residue" description="Phosphoserine" evidence="1">
    <location>
        <position position="290"/>
    </location>
</feature>
<feature type="modified residue" description="Phosphoserine" evidence="33">
    <location>
        <position position="397"/>
    </location>
</feature>
<feature type="modified residue" description="Phosphoserine" evidence="33">
    <location>
        <position position="410"/>
    </location>
</feature>
<feature type="modified residue" description="Phosphoserine" evidence="32">
    <location>
        <position position="1079"/>
    </location>
</feature>
<feature type="modified residue" description="Phosphoserine" evidence="1">
    <location>
        <position position="1566"/>
    </location>
</feature>
<feature type="modified residue" description="Phosphoserine" evidence="28 29 30 31 32 33 34">
    <location>
        <position position="1569"/>
    </location>
</feature>
<feature type="sequence variant" id="VAR_028749" description="In dbSNP:rs4321984.">
    <original>D</original>
    <variation>Y</variation>
    <location>
        <position position="273"/>
    </location>
</feature>
<feature type="sequence variant" id="VAR_036155" description="In a colorectal cancer sample; somatic mutation." evidence="11">
    <original>G</original>
    <variation>E</variation>
    <location>
        <position position="316"/>
    </location>
</feature>
<feature type="sequence variant" id="VAR_087629" description="In DEDISB; decreased protein abundance." evidence="24">
    <location>
        <begin position="648"/>
        <end position="1849"/>
    </location>
</feature>
<feature type="sequence variant" id="VAR_087630" description="In DEDISB; decreased protein abundance; dbSNP:rs1840520188." evidence="24">
    <original>D</original>
    <variation>N</variation>
    <location>
        <position position="798"/>
    </location>
</feature>
<feature type="sequence variant" id="VAR_087631" description="In DEDISB." evidence="24">
    <location>
        <begin position="842"/>
        <end position="1849"/>
    </location>
</feature>
<feature type="sequence variant" id="VAR_087632" description="In DEDISB." evidence="23">
    <location>
        <begin position="1455"/>
        <end position="1849"/>
    </location>
</feature>
<feature type="sequence variant" id="VAR_087633" description="In DEDISB." evidence="24">
    <location>
        <begin position="1774"/>
        <end position="1849"/>
    </location>
</feature>
<feature type="mutagenesis site" description="Loss of interaction with ARL1." evidence="21">
    <original>K</original>
    <variation>D</variation>
    <location>
        <position position="105"/>
    </location>
</feature>
<feature type="mutagenesis site" description="LLoss of interaction with ARL1." evidence="21">
    <original>Y</original>
    <variation>K</variation>
    <location>
        <position position="109"/>
    </location>
</feature>
<feature type="mutagenesis site" description="Loss of interaction with ARL1." evidence="21">
    <original>L</original>
    <variation>D</variation>
    <location>
        <position position="156"/>
    </location>
</feature>
<feature type="mutagenesis site" description="Loss of interaction with ARL1." evidence="21">
    <original>Q</original>
    <variation>E</variation>
    <location>
        <position position="200"/>
    </location>
</feature>
<feature type="mutagenesis site" description="No effect on self-association." evidence="14">
    <original>E</original>
    <variation>K</variation>
    <location>
        <position position="221"/>
    </location>
</feature>
<feature type="mutagenesis site" description="Inhibits nuclear localization." evidence="10">
    <original>KPK</original>
    <variation>AAA</variation>
    <location>
        <begin position="712"/>
        <end position="714"/>
    </location>
</feature>
<feature type="mutagenesis site" description="Abolishes cAMP-induced nuclear localization." evidence="10">
    <original>S</original>
    <variation>A</variation>
    <location>
        <position position="883"/>
    </location>
</feature>
<feature type="mutagenesis site" description="No effect on cAMP-induced nuclear localization." evidence="10">
    <original>S</original>
    <variation>D</variation>
    <location>
        <position position="883"/>
    </location>
</feature>
<feature type="sequence conflict" description="In Ref. 1; AAD38427." evidence="25" ref="1">
    <original>Q</original>
    <variation>P</variation>
    <location>
        <position position="233"/>
    </location>
</feature>
<feature type="sequence conflict" description="In Ref. 1; AAD38427." evidence="25" ref="1">
    <original>L</original>
    <variation>S</variation>
    <location>
        <position position="620"/>
    </location>
</feature>
<feature type="sequence conflict" description="In Ref. 1; AAD38427." evidence="25" ref="1">
    <original>E</original>
    <variation>K</variation>
    <location>
        <position position="1055"/>
    </location>
</feature>
<feature type="sequence conflict" description="In Ref. 3; BAA91912." evidence="25" ref="3">
    <original>V</original>
    <variation>A</variation>
    <location>
        <position position="1590"/>
    </location>
</feature>
<feature type="helix" evidence="36">
    <location>
        <begin position="7"/>
        <end position="21"/>
    </location>
</feature>
<feature type="helix" evidence="36">
    <location>
        <begin position="23"/>
        <end position="25"/>
    </location>
</feature>
<feature type="helix" evidence="36">
    <location>
        <begin position="28"/>
        <end position="30"/>
    </location>
</feature>
<feature type="helix" evidence="36">
    <location>
        <begin position="31"/>
        <end position="48"/>
    </location>
</feature>
<feature type="helix" evidence="36">
    <location>
        <begin position="77"/>
        <end position="80"/>
    </location>
</feature>
<feature type="helix" evidence="36">
    <location>
        <begin position="81"/>
        <end position="88"/>
    </location>
</feature>
<feature type="helix" evidence="36">
    <location>
        <begin position="93"/>
        <end position="108"/>
    </location>
</feature>
<feature type="strand" evidence="37">
    <location>
        <begin position="122"/>
        <end position="124"/>
    </location>
</feature>
<feature type="helix" evidence="36">
    <location>
        <begin position="126"/>
        <end position="135"/>
    </location>
</feature>
<feature type="helix" evidence="36">
    <location>
        <begin position="145"/>
        <end position="160"/>
    </location>
</feature>
<feature type="helix" evidence="36">
    <location>
        <begin position="168"/>
        <end position="184"/>
    </location>
</feature>
<feature type="helix" evidence="36">
    <location>
        <begin position="188"/>
        <end position="194"/>
    </location>
</feature>
<feature type="helix" evidence="36">
    <location>
        <begin position="197"/>
        <end position="224"/>
    </location>
</feature>
<feature type="helix" evidence="35">
    <location>
        <begin position="698"/>
        <end position="711"/>
    </location>
</feature>
<feature type="helix" evidence="35">
    <location>
        <begin position="713"/>
        <end position="722"/>
    </location>
</feature>
<feature type="helix" evidence="35">
    <location>
        <begin position="730"/>
        <end position="739"/>
    </location>
</feature>
<feature type="helix" evidence="35">
    <location>
        <begin position="745"/>
        <end position="752"/>
    </location>
</feature>
<feature type="helix" evidence="35">
    <location>
        <begin position="757"/>
        <end position="768"/>
    </location>
</feature>
<feature type="helix" evidence="35">
    <location>
        <begin position="777"/>
        <end position="786"/>
    </location>
</feature>
<feature type="helix" evidence="35">
    <location>
        <begin position="794"/>
        <end position="810"/>
    </location>
</feature>
<feature type="helix" evidence="35">
    <location>
        <begin position="821"/>
        <end position="838"/>
    </location>
</feature>
<feature type="helix" evidence="35">
    <location>
        <begin position="849"/>
        <end position="855"/>
    </location>
</feature>
<feature type="strand" evidence="35">
    <location>
        <begin position="861"/>
        <end position="864"/>
    </location>
</feature>
<feature type="helix" evidence="35">
    <location>
        <begin position="867"/>
        <end position="879"/>
    </location>
</feature>